<proteinExistence type="evidence at protein level"/>
<protein>
    <recommendedName>
        <fullName>ATP-dependent Clp protease proteolytic subunit, mitochondrial</fullName>
        <ecNumber evidence="2">3.4.21.92</ecNumber>
    </recommendedName>
    <alternativeName>
        <fullName evidence="8">Caseinolytic mitochondrial matrix peptidase proteolytic subunit</fullName>
    </alternativeName>
    <alternativeName>
        <fullName>Endopeptidase Clp</fullName>
    </alternativeName>
</protein>
<accession>O88696</accession>
<accession>Q3TI13</accession>
<evidence type="ECO:0000250" key="1"/>
<evidence type="ECO:0000250" key="2">
    <source>
        <dbReference type="UniProtKB" id="Q16740"/>
    </source>
</evidence>
<evidence type="ECO:0000256" key="3">
    <source>
        <dbReference type="SAM" id="MobiDB-lite"/>
    </source>
</evidence>
<evidence type="ECO:0000269" key="4">
    <source>
    </source>
</evidence>
<evidence type="ECO:0000269" key="5">
    <source>
    </source>
</evidence>
<evidence type="ECO:0000269" key="6">
    <source>
    </source>
</evidence>
<evidence type="ECO:0000305" key="7"/>
<evidence type="ECO:0000312" key="8">
    <source>
        <dbReference type="MGI" id="MGI:1858213"/>
    </source>
</evidence>
<evidence type="ECO:0007744" key="9">
    <source>
    </source>
</evidence>
<evidence type="ECO:0007744" key="10">
    <source>
    </source>
</evidence>
<sequence length="272" mass="29800">MWPRVLLGEARVAVDGCRALLSRLAVHFSPPWTAVSCSPLRRSLHGTATRAFPLIPIVVEQTGRGERAYDIYSRLLRERIVCVMGPIDDSVASLVIAQLLFLQSESNKKPIHMYINSPGGVVTAGLAIYDTMQYILNPICTWCVGQAASMGSLLLAAGSPGMRHSLPNSRIMIHQPSGGARGQATDIAIQAEEIMKLKKQLYNIYAKHTKQSLQVIESAMERDRYMSPMEAQEFGILDKVLVHPPQDGEDEPELVQKETATAPTDPPAPTST</sequence>
<comment type="function">
    <text evidence="2">Protease component of the ClpXP complex that cleaves peptides and various proteins in an ATP-dependent process. Has low peptidase activity in the absence of CLPX. The ClpXP complex can degrade CSN1S1, CSN2 and CSN3, as well as synthetic peptides (in vitro) and may be responsible for a fairly general and central housekeeping function rather than for the degradation of specific substrates. Cleaves PINK1 in the mitochondrion.</text>
</comment>
<comment type="catalytic activity">
    <reaction evidence="2">
        <text>Hydrolysis of proteins to small peptides in the presence of ATP and magnesium. alpha-casein is the usual test substrate. In the absence of ATP, only oligopeptides shorter than five residues are hydrolyzed (such as succinyl-Leu-Tyr-|-NHMec, and Leu-Tyr-Leu-|-Tyr-Trp, in which cleavage of the -Tyr-|-Leu- and -Tyr-|-Trp bonds also occurs).</text>
        <dbReference type="EC" id="3.4.21.92"/>
    </reaction>
</comment>
<comment type="subunit">
    <text evidence="5">Fourteen CLPP subunits assemble into 2 heptameric rings which stack back to back to give a disk-like structure with a central cavity. Component of the ClpXP complex formed by the assembly of two CLPP heptameric rings with two CLPX hexameric rings, giving rise to a symmetrical structure with two central CLPP rings flanked by a CLPX ring at either end of the complex.</text>
</comment>
<comment type="subcellular location">
    <subcellularLocation>
        <location evidence="4 5">Mitochondrion matrix</location>
    </subcellularLocation>
</comment>
<comment type="tissue specificity">
    <text evidence="4 5">Detected in liver (at protein level). High levels found in heart, liver and skeletal muscle.</text>
</comment>
<comment type="disruption phenotype">
    <text evidence="6">Homozygous pups are born at about 60 % of the expected Mendelian rate, indicating decreased intrauterine survival. Mutant mice are smaller in size than wild-type littermates, show decreased motor activity, are completely deaf after 12 months and their lifespan is decreased relative to that of wild-type littermates. Both female and male mutant mice are completely infertile due to defects in germ cell development.</text>
</comment>
<comment type="similarity">
    <text evidence="7">Belongs to the peptidase S14 family.</text>
</comment>
<name>CLPP_MOUSE</name>
<keyword id="KW-0007">Acetylation</keyword>
<keyword id="KW-0378">Hydrolase</keyword>
<keyword id="KW-0496">Mitochondrion</keyword>
<keyword id="KW-0645">Protease</keyword>
<keyword id="KW-1185">Reference proteome</keyword>
<keyword id="KW-0720">Serine protease</keyword>
<keyword id="KW-0809">Transit peptide</keyword>
<feature type="transit peptide" description="Mitochondrion" evidence="1">
    <location>
        <begin position="1"/>
        <end position="52"/>
    </location>
</feature>
<feature type="chain" id="PRO_0000005517" description="ATP-dependent Clp protease proteolytic subunit, mitochondrial">
    <location>
        <begin position="53"/>
        <end position="272"/>
    </location>
</feature>
<feature type="region of interest" description="Disordered" evidence="3">
    <location>
        <begin position="240"/>
        <end position="272"/>
    </location>
</feature>
<feature type="active site" description="Nucleophile" evidence="1">
    <location>
        <position position="149"/>
    </location>
</feature>
<feature type="active site" evidence="1">
    <location>
        <position position="174"/>
    </location>
</feature>
<feature type="modified residue" description="N6-succinyllysine" evidence="10">
    <location>
        <position position="196"/>
    </location>
</feature>
<feature type="modified residue" description="N6-acetyllysine" evidence="9">
    <location>
        <position position="207"/>
    </location>
</feature>
<dbReference type="EC" id="3.4.21.92" evidence="2"/>
<dbReference type="EMBL" id="AJ005253">
    <property type="protein sequence ID" value="CAA06443.1"/>
    <property type="molecule type" value="mRNA"/>
</dbReference>
<dbReference type="EMBL" id="AJ012249">
    <property type="protein sequence ID" value="CAA09966.1"/>
    <property type="molecule type" value="Genomic_DNA"/>
</dbReference>
<dbReference type="EMBL" id="AJ012250">
    <property type="protein sequence ID" value="CAA09966.1"/>
    <property type="status" value="JOINED"/>
    <property type="molecule type" value="Genomic_DNA"/>
</dbReference>
<dbReference type="EMBL" id="AJ012251">
    <property type="protein sequence ID" value="CAA09966.1"/>
    <property type="status" value="JOINED"/>
    <property type="molecule type" value="Genomic_DNA"/>
</dbReference>
<dbReference type="EMBL" id="AJ012252">
    <property type="protein sequence ID" value="CAA09966.1"/>
    <property type="status" value="JOINED"/>
    <property type="molecule type" value="Genomic_DNA"/>
</dbReference>
<dbReference type="EMBL" id="AJ012253">
    <property type="protein sequence ID" value="CAA09966.1"/>
    <property type="status" value="JOINED"/>
    <property type="molecule type" value="Genomic_DNA"/>
</dbReference>
<dbReference type="EMBL" id="AK004024">
    <property type="protein sequence ID" value="BAB23132.1"/>
    <property type="molecule type" value="mRNA"/>
</dbReference>
<dbReference type="EMBL" id="AK145765">
    <property type="protein sequence ID" value="BAE26636.1"/>
    <property type="molecule type" value="mRNA"/>
</dbReference>
<dbReference type="EMBL" id="AK168053">
    <property type="protein sequence ID" value="BAE40033.1"/>
    <property type="molecule type" value="mRNA"/>
</dbReference>
<dbReference type="EMBL" id="BC001998">
    <property type="protein sequence ID" value="AAH01998.1"/>
    <property type="molecule type" value="mRNA"/>
</dbReference>
<dbReference type="CCDS" id="CCDS28920.1"/>
<dbReference type="RefSeq" id="NP_059089.1">
    <property type="nucleotide sequence ID" value="NM_017393.2"/>
</dbReference>
<dbReference type="SMR" id="O88696"/>
<dbReference type="BioGRID" id="207517">
    <property type="interactions" value="7"/>
</dbReference>
<dbReference type="FunCoup" id="O88696">
    <property type="interactions" value="1980"/>
</dbReference>
<dbReference type="IntAct" id="O88696">
    <property type="interactions" value="1"/>
</dbReference>
<dbReference type="STRING" id="10090.ENSMUSP00000002735"/>
<dbReference type="MEROPS" id="S14.003"/>
<dbReference type="GlyGen" id="O88696">
    <property type="glycosylation" value="1 site, 1 O-linked glycan (1 site)"/>
</dbReference>
<dbReference type="iPTMnet" id="O88696"/>
<dbReference type="PhosphoSitePlus" id="O88696"/>
<dbReference type="SwissPalm" id="O88696"/>
<dbReference type="REPRODUCTION-2DPAGE" id="IPI00133270"/>
<dbReference type="REPRODUCTION-2DPAGE" id="O88696"/>
<dbReference type="jPOST" id="O88696"/>
<dbReference type="PaxDb" id="10090-ENSMUSP00000002735"/>
<dbReference type="PeptideAtlas" id="O88696"/>
<dbReference type="ProteomicsDB" id="283632"/>
<dbReference type="Pumba" id="O88696"/>
<dbReference type="Antibodypedia" id="1703">
    <property type="antibodies" value="379 antibodies from 34 providers"/>
</dbReference>
<dbReference type="DNASU" id="53895"/>
<dbReference type="Ensembl" id="ENSMUST00000002735.9">
    <property type="protein sequence ID" value="ENSMUSP00000002735.8"/>
    <property type="gene ID" value="ENSMUSG00000002660.9"/>
</dbReference>
<dbReference type="GeneID" id="53895"/>
<dbReference type="KEGG" id="mmu:53895"/>
<dbReference type="UCSC" id="uc008ddm.2">
    <property type="organism name" value="mouse"/>
</dbReference>
<dbReference type="AGR" id="MGI:1858213"/>
<dbReference type="CTD" id="8192"/>
<dbReference type="MGI" id="MGI:1858213">
    <property type="gene designation" value="Clpp"/>
</dbReference>
<dbReference type="VEuPathDB" id="HostDB:ENSMUSG00000002660"/>
<dbReference type="eggNOG" id="KOG0840">
    <property type="taxonomic scope" value="Eukaryota"/>
</dbReference>
<dbReference type="GeneTree" id="ENSGT00390000005830"/>
<dbReference type="HOGENOM" id="CLU_058707_3_0_1"/>
<dbReference type="InParanoid" id="O88696"/>
<dbReference type="OMA" id="RDYWMKA"/>
<dbReference type="OrthoDB" id="2017408at2759"/>
<dbReference type="PhylomeDB" id="O88696"/>
<dbReference type="TreeFam" id="TF105002"/>
<dbReference type="BRENDA" id="3.4.21.92">
    <property type="organism ID" value="3474"/>
</dbReference>
<dbReference type="Reactome" id="R-MMU-9837999">
    <property type="pathway name" value="Mitochondrial protein degradation"/>
</dbReference>
<dbReference type="BioGRID-ORCS" id="53895">
    <property type="hits" value="14 hits in 80 CRISPR screens"/>
</dbReference>
<dbReference type="ChiTaRS" id="Clpp">
    <property type="organism name" value="mouse"/>
</dbReference>
<dbReference type="PRO" id="PR:O88696"/>
<dbReference type="Proteomes" id="UP000000589">
    <property type="component" value="Chromosome 17"/>
</dbReference>
<dbReference type="RNAct" id="O88696">
    <property type="molecule type" value="protein"/>
</dbReference>
<dbReference type="Bgee" id="ENSMUSG00000002660">
    <property type="expression patterns" value="Expressed in interventricular septum and 268 other cell types or tissues"/>
</dbReference>
<dbReference type="GO" id="GO:0009368">
    <property type="term" value="C:endopeptidase Clp complex"/>
    <property type="evidence" value="ECO:0000250"/>
    <property type="project" value="UniProtKB"/>
</dbReference>
<dbReference type="GO" id="GO:0005759">
    <property type="term" value="C:mitochondrial matrix"/>
    <property type="evidence" value="ECO:0000250"/>
    <property type="project" value="UniProtKB"/>
</dbReference>
<dbReference type="GO" id="GO:0005739">
    <property type="term" value="C:mitochondrion"/>
    <property type="evidence" value="ECO:0000314"/>
    <property type="project" value="MGI"/>
</dbReference>
<dbReference type="GO" id="GO:0004176">
    <property type="term" value="F:ATP-dependent peptidase activity"/>
    <property type="evidence" value="ECO:0007669"/>
    <property type="project" value="InterPro"/>
</dbReference>
<dbReference type="GO" id="GO:0004252">
    <property type="term" value="F:serine-type endopeptidase activity"/>
    <property type="evidence" value="ECO:0000250"/>
    <property type="project" value="UniProtKB"/>
</dbReference>
<dbReference type="GO" id="GO:0033619">
    <property type="term" value="P:membrane protein proteolysis"/>
    <property type="evidence" value="ECO:0007669"/>
    <property type="project" value="Ensembl"/>
</dbReference>
<dbReference type="GO" id="GO:0006515">
    <property type="term" value="P:protein quality control for misfolded or incompletely synthesized proteins"/>
    <property type="evidence" value="ECO:0000247"/>
    <property type="project" value="MGI"/>
</dbReference>
<dbReference type="GO" id="GO:0051603">
    <property type="term" value="P:proteolysis involved in protein catabolic process"/>
    <property type="evidence" value="ECO:0000250"/>
    <property type="project" value="UniProtKB"/>
</dbReference>
<dbReference type="CDD" id="cd07017">
    <property type="entry name" value="S14_ClpP_2"/>
    <property type="match status" value="1"/>
</dbReference>
<dbReference type="FunFam" id="3.90.226.10:FF:000001">
    <property type="entry name" value="ATP-dependent Clp protease proteolytic subunit"/>
    <property type="match status" value="1"/>
</dbReference>
<dbReference type="Gene3D" id="3.90.226.10">
    <property type="entry name" value="2-enoyl-CoA Hydratase, Chain A, domain 1"/>
    <property type="match status" value="1"/>
</dbReference>
<dbReference type="HAMAP" id="MF_00444">
    <property type="entry name" value="ClpP"/>
    <property type="match status" value="1"/>
</dbReference>
<dbReference type="InterPro" id="IPR001907">
    <property type="entry name" value="ClpP"/>
</dbReference>
<dbReference type="InterPro" id="IPR029045">
    <property type="entry name" value="ClpP/crotonase-like_dom_sf"/>
</dbReference>
<dbReference type="InterPro" id="IPR023562">
    <property type="entry name" value="ClpP/TepA"/>
</dbReference>
<dbReference type="InterPro" id="IPR033135">
    <property type="entry name" value="ClpP_His_AS"/>
</dbReference>
<dbReference type="InterPro" id="IPR018215">
    <property type="entry name" value="ClpP_Ser_AS"/>
</dbReference>
<dbReference type="NCBIfam" id="NF001368">
    <property type="entry name" value="PRK00277.1"/>
    <property type="match status" value="1"/>
</dbReference>
<dbReference type="NCBIfam" id="NF009205">
    <property type="entry name" value="PRK12553.1"/>
    <property type="match status" value="1"/>
</dbReference>
<dbReference type="PANTHER" id="PTHR10381">
    <property type="entry name" value="ATP-DEPENDENT CLP PROTEASE PROTEOLYTIC SUBUNIT"/>
    <property type="match status" value="1"/>
</dbReference>
<dbReference type="PANTHER" id="PTHR10381:SF11">
    <property type="entry name" value="ATP-DEPENDENT CLP PROTEASE PROTEOLYTIC SUBUNIT, MITOCHONDRIAL"/>
    <property type="match status" value="1"/>
</dbReference>
<dbReference type="Pfam" id="PF00574">
    <property type="entry name" value="CLP_protease"/>
    <property type="match status" value="1"/>
</dbReference>
<dbReference type="PRINTS" id="PR00127">
    <property type="entry name" value="CLPPROTEASEP"/>
</dbReference>
<dbReference type="SUPFAM" id="SSF52096">
    <property type="entry name" value="ClpP/crotonase"/>
    <property type="match status" value="1"/>
</dbReference>
<dbReference type="PROSITE" id="PS00382">
    <property type="entry name" value="CLP_PROTEASE_HIS"/>
    <property type="match status" value="1"/>
</dbReference>
<dbReference type="PROSITE" id="PS00381">
    <property type="entry name" value="CLP_PROTEASE_SER"/>
    <property type="match status" value="1"/>
</dbReference>
<organism>
    <name type="scientific">Mus musculus</name>
    <name type="common">Mouse</name>
    <dbReference type="NCBI Taxonomy" id="10090"/>
    <lineage>
        <taxon>Eukaryota</taxon>
        <taxon>Metazoa</taxon>
        <taxon>Chordata</taxon>
        <taxon>Craniata</taxon>
        <taxon>Vertebrata</taxon>
        <taxon>Euteleostomi</taxon>
        <taxon>Mammalia</taxon>
        <taxon>Eutheria</taxon>
        <taxon>Euarchontoglires</taxon>
        <taxon>Glires</taxon>
        <taxon>Rodentia</taxon>
        <taxon>Myomorpha</taxon>
        <taxon>Muroidea</taxon>
        <taxon>Muridae</taxon>
        <taxon>Murinae</taxon>
        <taxon>Mus</taxon>
        <taxon>Mus</taxon>
    </lineage>
</organism>
<gene>
    <name evidence="8" type="primary">Clpp</name>
</gene>
<reference key="1">
    <citation type="journal article" date="2000" name="Mamm. Genome">
        <title>Characterization of mouse Clpp protease cDNA, gene, and protein.</title>
        <authorList>
            <person name="Andresen B.S."/>
            <person name="Corydon T.J."/>
            <person name="Wilsbech M."/>
            <person name="Bross P."/>
            <person name="Schroeder L.D."/>
            <person name="Hindkjaer T.F."/>
            <person name="Bolund L."/>
            <person name="Gregersen N."/>
        </authorList>
    </citation>
    <scope>NUCLEOTIDE SEQUENCE [GENOMIC DNA / MRNA]</scope>
    <scope>SUBCELLULAR LOCATION</scope>
    <scope>TISSUE SPECIFICITY</scope>
    <source>
        <strain>129/SvJ</strain>
        <strain>BALB/cJ</strain>
        <tissue>Heart</tissue>
    </source>
</reference>
<reference key="2">
    <citation type="journal article" date="2005" name="Science">
        <title>The transcriptional landscape of the mammalian genome.</title>
        <authorList>
            <person name="Carninci P."/>
            <person name="Kasukawa T."/>
            <person name="Katayama S."/>
            <person name="Gough J."/>
            <person name="Frith M.C."/>
            <person name="Maeda N."/>
            <person name="Oyama R."/>
            <person name="Ravasi T."/>
            <person name="Lenhard B."/>
            <person name="Wells C."/>
            <person name="Kodzius R."/>
            <person name="Shimokawa K."/>
            <person name="Bajic V.B."/>
            <person name="Brenner S.E."/>
            <person name="Batalov S."/>
            <person name="Forrest A.R."/>
            <person name="Zavolan M."/>
            <person name="Davis M.J."/>
            <person name="Wilming L.G."/>
            <person name="Aidinis V."/>
            <person name="Allen J.E."/>
            <person name="Ambesi-Impiombato A."/>
            <person name="Apweiler R."/>
            <person name="Aturaliya R.N."/>
            <person name="Bailey T.L."/>
            <person name="Bansal M."/>
            <person name="Baxter L."/>
            <person name="Beisel K.W."/>
            <person name="Bersano T."/>
            <person name="Bono H."/>
            <person name="Chalk A.M."/>
            <person name="Chiu K.P."/>
            <person name="Choudhary V."/>
            <person name="Christoffels A."/>
            <person name="Clutterbuck D.R."/>
            <person name="Crowe M.L."/>
            <person name="Dalla E."/>
            <person name="Dalrymple B.P."/>
            <person name="de Bono B."/>
            <person name="Della Gatta G."/>
            <person name="di Bernardo D."/>
            <person name="Down T."/>
            <person name="Engstrom P."/>
            <person name="Fagiolini M."/>
            <person name="Faulkner G."/>
            <person name="Fletcher C.F."/>
            <person name="Fukushima T."/>
            <person name="Furuno M."/>
            <person name="Futaki S."/>
            <person name="Gariboldi M."/>
            <person name="Georgii-Hemming P."/>
            <person name="Gingeras T.R."/>
            <person name="Gojobori T."/>
            <person name="Green R.E."/>
            <person name="Gustincich S."/>
            <person name="Harbers M."/>
            <person name="Hayashi Y."/>
            <person name="Hensch T.K."/>
            <person name="Hirokawa N."/>
            <person name="Hill D."/>
            <person name="Huminiecki L."/>
            <person name="Iacono M."/>
            <person name="Ikeo K."/>
            <person name="Iwama A."/>
            <person name="Ishikawa T."/>
            <person name="Jakt M."/>
            <person name="Kanapin A."/>
            <person name="Katoh M."/>
            <person name="Kawasawa Y."/>
            <person name="Kelso J."/>
            <person name="Kitamura H."/>
            <person name="Kitano H."/>
            <person name="Kollias G."/>
            <person name="Krishnan S.P."/>
            <person name="Kruger A."/>
            <person name="Kummerfeld S.K."/>
            <person name="Kurochkin I.V."/>
            <person name="Lareau L.F."/>
            <person name="Lazarevic D."/>
            <person name="Lipovich L."/>
            <person name="Liu J."/>
            <person name="Liuni S."/>
            <person name="McWilliam S."/>
            <person name="Madan Babu M."/>
            <person name="Madera M."/>
            <person name="Marchionni L."/>
            <person name="Matsuda H."/>
            <person name="Matsuzawa S."/>
            <person name="Miki H."/>
            <person name="Mignone F."/>
            <person name="Miyake S."/>
            <person name="Morris K."/>
            <person name="Mottagui-Tabar S."/>
            <person name="Mulder N."/>
            <person name="Nakano N."/>
            <person name="Nakauchi H."/>
            <person name="Ng P."/>
            <person name="Nilsson R."/>
            <person name="Nishiguchi S."/>
            <person name="Nishikawa S."/>
            <person name="Nori F."/>
            <person name="Ohara O."/>
            <person name="Okazaki Y."/>
            <person name="Orlando V."/>
            <person name="Pang K.C."/>
            <person name="Pavan W.J."/>
            <person name="Pavesi G."/>
            <person name="Pesole G."/>
            <person name="Petrovsky N."/>
            <person name="Piazza S."/>
            <person name="Reed J."/>
            <person name="Reid J.F."/>
            <person name="Ring B.Z."/>
            <person name="Ringwald M."/>
            <person name="Rost B."/>
            <person name="Ruan Y."/>
            <person name="Salzberg S.L."/>
            <person name="Sandelin A."/>
            <person name="Schneider C."/>
            <person name="Schoenbach C."/>
            <person name="Sekiguchi K."/>
            <person name="Semple C.A."/>
            <person name="Seno S."/>
            <person name="Sessa L."/>
            <person name="Sheng Y."/>
            <person name="Shibata Y."/>
            <person name="Shimada H."/>
            <person name="Shimada K."/>
            <person name="Silva D."/>
            <person name="Sinclair B."/>
            <person name="Sperling S."/>
            <person name="Stupka E."/>
            <person name="Sugiura K."/>
            <person name="Sultana R."/>
            <person name="Takenaka Y."/>
            <person name="Taki K."/>
            <person name="Tammoja K."/>
            <person name="Tan S.L."/>
            <person name="Tang S."/>
            <person name="Taylor M.S."/>
            <person name="Tegner J."/>
            <person name="Teichmann S.A."/>
            <person name="Ueda H.R."/>
            <person name="van Nimwegen E."/>
            <person name="Verardo R."/>
            <person name="Wei C.L."/>
            <person name="Yagi K."/>
            <person name="Yamanishi H."/>
            <person name="Zabarovsky E."/>
            <person name="Zhu S."/>
            <person name="Zimmer A."/>
            <person name="Hide W."/>
            <person name="Bult C."/>
            <person name="Grimmond S.M."/>
            <person name="Teasdale R.D."/>
            <person name="Liu E.T."/>
            <person name="Brusic V."/>
            <person name="Quackenbush J."/>
            <person name="Wahlestedt C."/>
            <person name="Mattick J.S."/>
            <person name="Hume D.A."/>
            <person name="Kai C."/>
            <person name="Sasaki D."/>
            <person name="Tomaru Y."/>
            <person name="Fukuda S."/>
            <person name="Kanamori-Katayama M."/>
            <person name="Suzuki M."/>
            <person name="Aoki J."/>
            <person name="Arakawa T."/>
            <person name="Iida J."/>
            <person name="Imamura K."/>
            <person name="Itoh M."/>
            <person name="Kato T."/>
            <person name="Kawaji H."/>
            <person name="Kawagashira N."/>
            <person name="Kawashima T."/>
            <person name="Kojima M."/>
            <person name="Kondo S."/>
            <person name="Konno H."/>
            <person name="Nakano K."/>
            <person name="Ninomiya N."/>
            <person name="Nishio T."/>
            <person name="Okada M."/>
            <person name="Plessy C."/>
            <person name="Shibata K."/>
            <person name="Shiraki T."/>
            <person name="Suzuki S."/>
            <person name="Tagami M."/>
            <person name="Waki K."/>
            <person name="Watahiki A."/>
            <person name="Okamura-Oho Y."/>
            <person name="Suzuki H."/>
            <person name="Kawai J."/>
            <person name="Hayashizaki Y."/>
        </authorList>
    </citation>
    <scope>NUCLEOTIDE SEQUENCE [LARGE SCALE MRNA]</scope>
    <source>
        <strain>BALB/cJ</strain>
        <strain>C57BL/6J</strain>
        <tissue>Embryo</tissue>
    </source>
</reference>
<reference key="3">
    <citation type="journal article" date="2004" name="Genome Res.">
        <title>The status, quality, and expansion of the NIH full-length cDNA project: the Mammalian Gene Collection (MGC).</title>
        <authorList>
            <consortium name="The MGC Project Team"/>
        </authorList>
    </citation>
    <scope>NUCLEOTIDE SEQUENCE [LARGE SCALE MRNA]</scope>
    <source>
        <strain>C57BL/6J</strain>
        <tissue>Mammary gland</tissue>
    </source>
</reference>
<reference key="4">
    <citation type="journal article" date="2010" name="Cell">
        <title>A tissue-specific atlas of mouse protein phosphorylation and expression.</title>
        <authorList>
            <person name="Huttlin E.L."/>
            <person name="Jedrychowski M.P."/>
            <person name="Elias J.E."/>
            <person name="Goswami T."/>
            <person name="Rad R."/>
            <person name="Beausoleil S.A."/>
            <person name="Villen J."/>
            <person name="Haas W."/>
            <person name="Sowa M.E."/>
            <person name="Gygi S.P."/>
        </authorList>
    </citation>
    <scope>IDENTIFICATION BY MASS SPECTROMETRY [LARGE SCALE ANALYSIS]</scope>
    <source>
        <tissue>Brain</tissue>
        <tissue>Brown adipose tissue</tissue>
        <tissue>Heart</tissue>
        <tissue>Kidney</tissue>
        <tissue>Liver</tissue>
        <tissue>Lung</tissue>
        <tissue>Pancreas</tissue>
        <tissue>Spleen</tissue>
        <tissue>Testis</tissue>
    </source>
</reference>
<reference key="5">
    <citation type="journal article" date="2012" name="J. Struct. Biol.">
        <title>Substrate recognition and processing by a Walker B mutant of the human mitochondrial AAA+ protein CLPX.</title>
        <authorList>
            <person name="Lowth B.R."/>
            <person name="Kirstein-Miles J."/>
            <person name="Saiyed T."/>
            <person name="Broetz-Oesterhelt H."/>
            <person name="Morimoto R.I."/>
            <person name="Truscott K.N."/>
            <person name="Dougan D.A."/>
        </authorList>
    </citation>
    <scope>SUBUNIT</scope>
    <scope>INTERACTION WITH CLPX</scope>
    <scope>SUBCELLULAR LOCATION</scope>
    <scope>TISSUE SPECIFICITY</scope>
</reference>
<reference key="6">
    <citation type="journal article" date="2013" name="Hum. Mol. Genet.">
        <title>Loss of mitochondrial peptidase Clpp leads to infertility, hearing loss plus growth retardation via accumulation of CLPX, mtDNA and inflammatory factors.</title>
        <authorList>
            <person name="Gispert S."/>
            <person name="Parganlija D."/>
            <person name="Klinkenberg M."/>
            <person name="Drose S."/>
            <person name="Wittig I."/>
            <person name="Mittelbronn M."/>
            <person name="Grzmil P."/>
            <person name="Koob S."/>
            <person name="Hamann A."/>
            <person name="Walter M."/>
            <person name="Buchel F."/>
            <person name="Adler T."/>
            <person name="Hrabe de Angelis M."/>
            <person name="Busch D.H."/>
            <person name="Zell A."/>
            <person name="Reichert A.S."/>
            <person name="Brandt U."/>
            <person name="Osiewacz H.D."/>
            <person name="Jendrach M."/>
            <person name="Auburger G."/>
        </authorList>
    </citation>
    <scope>DISRUPTION PHENOTYPE</scope>
</reference>
<reference key="7">
    <citation type="journal article" date="2013" name="Mol. Cell">
        <title>SIRT5-mediated lysine desuccinylation impacts diverse metabolic pathways.</title>
        <authorList>
            <person name="Park J."/>
            <person name="Chen Y."/>
            <person name="Tishkoff D.X."/>
            <person name="Peng C."/>
            <person name="Tan M."/>
            <person name="Dai L."/>
            <person name="Xie Z."/>
            <person name="Zhang Y."/>
            <person name="Zwaans B.M."/>
            <person name="Skinner M.E."/>
            <person name="Lombard D.B."/>
            <person name="Zhao Y."/>
        </authorList>
    </citation>
    <scope>SUCCINYLATION [LARGE SCALE ANALYSIS] AT LYS-196</scope>
    <scope>IDENTIFICATION BY MASS SPECTROMETRY [LARGE SCALE ANALYSIS]</scope>
    <source>
        <tissue>Liver</tissue>
    </source>
</reference>
<reference key="8">
    <citation type="journal article" date="2013" name="Proc. Natl. Acad. Sci. U.S.A.">
        <title>Label-free quantitative proteomics of the lysine acetylome in mitochondria identifies substrates of SIRT3 in metabolic pathways.</title>
        <authorList>
            <person name="Rardin M.J."/>
            <person name="Newman J.C."/>
            <person name="Held J.M."/>
            <person name="Cusack M.P."/>
            <person name="Sorensen D.J."/>
            <person name="Li B."/>
            <person name="Schilling B."/>
            <person name="Mooney S.D."/>
            <person name="Kahn C.R."/>
            <person name="Verdin E."/>
            <person name="Gibson B.W."/>
        </authorList>
    </citation>
    <scope>ACETYLATION [LARGE SCALE ANALYSIS] AT LYS-207</scope>
    <scope>IDENTIFICATION BY MASS SPECTROMETRY [LARGE SCALE ANALYSIS]</scope>
    <source>
        <tissue>Liver</tissue>
    </source>
</reference>